<keyword id="KW-0030">Aminoacyl-tRNA synthetase</keyword>
<keyword id="KW-0067">ATP-binding</keyword>
<keyword id="KW-0963">Cytoplasm</keyword>
<keyword id="KW-0436">Ligase</keyword>
<keyword id="KW-0547">Nucleotide-binding</keyword>
<keyword id="KW-0648">Protein biosynthesis</keyword>
<accession>Q1CFH2</accession>
<accession>C4GWV7</accession>
<dbReference type="EC" id="6.1.1.15" evidence="1"/>
<dbReference type="EMBL" id="CP000305">
    <property type="protein sequence ID" value="ABG19258.1"/>
    <property type="molecule type" value="Genomic_DNA"/>
</dbReference>
<dbReference type="EMBL" id="ACNQ01000017">
    <property type="protein sequence ID" value="EEO75407.1"/>
    <property type="molecule type" value="Genomic_DNA"/>
</dbReference>
<dbReference type="RefSeq" id="WP_002212156.1">
    <property type="nucleotide sequence ID" value="NZ_ACNQ01000017.1"/>
</dbReference>
<dbReference type="SMR" id="Q1CFH2"/>
<dbReference type="GeneID" id="57977492"/>
<dbReference type="KEGG" id="ypn:YPN_2931"/>
<dbReference type="HOGENOM" id="CLU_016739_0_0_6"/>
<dbReference type="Proteomes" id="UP000008936">
    <property type="component" value="Chromosome"/>
</dbReference>
<dbReference type="GO" id="GO:0005829">
    <property type="term" value="C:cytosol"/>
    <property type="evidence" value="ECO:0007669"/>
    <property type="project" value="TreeGrafter"/>
</dbReference>
<dbReference type="GO" id="GO:0002161">
    <property type="term" value="F:aminoacyl-tRNA deacylase activity"/>
    <property type="evidence" value="ECO:0007669"/>
    <property type="project" value="InterPro"/>
</dbReference>
<dbReference type="GO" id="GO:0005524">
    <property type="term" value="F:ATP binding"/>
    <property type="evidence" value="ECO:0007669"/>
    <property type="project" value="UniProtKB-UniRule"/>
</dbReference>
<dbReference type="GO" id="GO:0004827">
    <property type="term" value="F:proline-tRNA ligase activity"/>
    <property type="evidence" value="ECO:0007669"/>
    <property type="project" value="UniProtKB-UniRule"/>
</dbReference>
<dbReference type="GO" id="GO:0006433">
    <property type="term" value="P:prolyl-tRNA aminoacylation"/>
    <property type="evidence" value="ECO:0007669"/>
    <property type="project" value="UniProtKB-UniRule"/>
</dbReference>
<dbReference type="CDD" id="cd04334">
    <property type="entry name" value="ProRS-INS"/>
    <property type="match status" value="1"/>
</dbReference>
<dbReference type="CDD" id="cd00861">
    <property type="entry name" value="ProRS_anticodon_short"/>
    <property type="match status" value="1"/>
</dbReference>
<dbReference type="CDD" id="cd00779">
    <property type="entry name" value="ProRS_core_prok"/>
    <property type="match status" value="1"/>
</dbReference>
<dbReference type="FunFam" id="3.30.930.10:FF:000012">
    <property type="entry name" value="Proline--tRNA ligase"/>
    <property type="match status" value="1"/>
</dbReference>
<dbReference type="FunFam" id="3.30.930.10:FF:000097">
    <property type="entry name" value="Proline--tRNA ligase"/>
    <property type="match status" value="1"/>
</dbReference>
<dbReference type="FunFam" id="3.40.50.800:FF:000006">
    <property type="entry name" value="Proline--tRNA ligase"/>
    <property type="match status" value="1"/>
</dbReference>
<dbReference type="FunFam" id="3.90.960.10:FF:000001">
    <property type="entry name" value="Proline--tRNA ligase"/>
    <property type="match status" value="1"/>
</dbReference>
<dbReference type="Gene3D" id="3.40.50.800">
    <property type="entry name" value="Anticodon-binding domain"/>
    <property type="match status" value="1"/>
</dbReference>
<dbReference type="Gene3D" id="3.30.930.10">
    <property type="entry name" value="Bira Bifunctional Protein, Domain 2"/>
    <property type="match status" value="2"/>
</dbReference>
<dbReference type="Gene3D" id="3.90.960.10">
    <property type="entry name" value="YbaK/aminoacyl-tRNA synthetase-associated domain"/>
    <property type="match status" value="1"/>
</dbReference>
<dbReference type="HAMAP" id="MF_01569">
    <property type="entry name" value="Pro_tRNA_synth_type1"/>
    <property type="match status" value="1"/>
</dbReference>
<dbReference type="InterPro" id="IPR002314">
    <property type="entry name" value="aa-tRNA-synt_IIb"/>
</dbReference>
<dbReference type="InterPro" id="IPR006195">
    <property type="entry name" value="aa-tRNA-synth_II"/>
</dbReference>
<dbReference type="InterPro" id="IPR045864">
    <property type="entry name" value="aa-tRNA-synth_II/BPL/LPL"/>
</dbReference>
<dbReference type="InterPro" id="IPR004154">
    <property type="entry name" value="Anticodon-bd"/>
</dbReference>
<dbReference type="InterPro" id="IPR036621">
    <property type="entry name" value="Anticodon-bd_dom_sf"/>
</dbReference>
<dbReference type="InterPro" id="IPR002316">
    <property type="entry name" value="Pro-tRNA-ligase_IIa"/>
</dbReference>
<dbReference type="InterPro" id="IPR004500">
    <property type="entry name" value="Pro-tRNA-synth_IIa_bac-type"/>
</dbReference>
<dbReference type="InterPro" id="IPR023717">
    <property type="entry name" value="Pro-tRNA-Synthase_IIa_type1"/>
</dbReference>
<dbReference type="InterPro" id="IPR050062">
    <property type="entry name" value="Pro-tRNA_synthetase"/>
</dbReference>
<dbReference type="InterPro" id="IPR044140">
    <property type="entry name" value="ProRS_anticodon_short"/>
</dbReference>
<dbReference type="InterPro" id="IPR033730">
    <property type="entry name" value="ProRS_core_prok"/>
</dbReference>
<dbReference type="InterPro" id="IPR036754">
    <property type="entry name" value="YbaK/aa-tRNA-synt-asso_dom_sf"/>
</dbReference>
<dbReference type="InterPro" id="IPR007214">
    <property type="entry name" value="YbaK/aa-tRNA-synth-assoc-dom"/>
</dbReference>
<dbReference type="NCBIfam" id="NF006625">
    <property type="entry name" value="PRK09194.1"/>
    <property type="match status" value="1"/>
</dbReference>
<dbReference type="NCBIfam" id="TIGR00409">
    <property type="entry name" value="proS_fam_II"/>
    <property type="match status" value="1"/>
</dbReference>
<dbReference type="PANTHER" id="PTHR42753">
    <property type="entry name" value="MITOCHONDRIAL RIBOSOME PROTEIN L39/PROLYL-TRNA LIGASE FAMILY MEMBER"/>
    <property type="match status" value="1"/>
</dbReference>
<dbReference type="PANTHER" id="PTHR42753:SF2">
    <property type="entry name" value="PROLINE--TRNA LIGASE"/>
    <property type="match status" value="1"/>
</dbReference>
<dbReference type="Pfam" id="PF03129">
    <property type="entry name" value="HGTP_anticodon"/>
    <property type="match status" value="1"/>
</dbReference>
<dbReference type="Pfam" id="PF00587">
    <property type="entry name" value="tRNA-synt_2b"/>
    <property type="match status" value="1"/>
</dbReference>
<dbReference type="Pfam" id="PF04073">
    <property type="entry name" value="tRNA_edit"/>
    <property type="match status" value="1"/>
</dbReference>
<dbReference type="PIRSF" id="PIRSF001535">
    <property type="entry name" value="ProRS_1"/>
    <property type="match status" value="1"/>
</dbReference>
<dbReference type="PRINTS" id="PR01046">
    <property type="entry name" value="TRNASYNTHPRO"/>
</dbReference>
<dbReference type="SUPFAM" id="SSF52954">
    <property type="entry name" value="Class II aaRS ABD-related"/>
    <property type="match status" value="1"/>
</dbReference>
<dbReference type="SUPFAM" id="SSF55681">
    <property type="entry name" value="Class II aaRS and biotin synthetases"/>
    <property type="match status" value="1"/>
</dbReference>
<dbReference type="SUPFAM" id="SSF55826">
    <property type="entry name" value="YbaK/ProRS associated domain"/>
    <property type="match status" value="1"/>
</dbReference>
<dbReference type="PROSITE" id="PS50862">
    <property type="entry name" value="AA_TRNA_LIGASE_II"/>
    <property type="match status" value="1"/>
</dbReference>
<gene>
    <name evidence="1" type="primary">proS</name>
    <name type="ordered locus">YPN_2931</name>
    <name type="ORF">YP516_3321</name>
</gene>
<protein>
    <recommendedName>
        <fullName evidence="1">Proline--tRNA ligase</fullName>
        <ecNumber evidence="1">6.1.1.15</ecNumber>
    </recommendedName>
    <alternativeName>
        <fullName evidence="1">Prolyl-tRNA synthetase</fullName>
        <shortName evidence="1">ProRS</shortName>
    </alternativeName>
</protein>
<evidence type="ECO:0000255" key="1">
    <source>
        <dbReference type="HAMAP-Rule" id="MF_01569"/>
    </source>
</evidence>
<organism>
    <name type="scientific">Yersinia pestis bv. Antiqua (strain Nepal516)</name>
    <dbReference type="NCBI Taxonomy" id="377628"/>
    <lineage>
        <taxon>Bacteria</taxon>
        <taxon>Pseudomonadati</taxon>
        <taxon>Pseudomonadota</taxon>
        <taxon>Gammaproteobacteria</taxon>
        <taxon>Enterobacterales</taxon>
        <taxon>Yersiniaceae</taxon>
        <taxon>Yersinia</taxon>
    </lineage>
</organism>
<name>SYP_YERPN</name>
<proteinExistence type="inferred from homology"/>
<feature type="chain" id="PRO_0000288392" description="Proline--tRNA ligase">
    <location>
        <begin position="1"/>
        <end position="572"/>
    </location>
</feature>
<sequence length="572" mass="63856">MRTSQYLLSTQKETPADAEVISHQLMLRAGMIRKLASGLYTWLPTGVRVLKKVENIVREEMNNAGAIEVSMPVVQPADLWQESGRWEQYGPELLRFVDRGERPFVLGPTHEEVITDLIRGEINSYKQLPLNFFQIQTKFRDEVRPRFGVMRAREFLMKDAYSFHTTQESLQETYDAMYTAYSKIFSRMDLNFRAVLADTGSIGGSASHEFQVLAESGEDDIVFSTGSDYAANIEFAEALAPTEPRAPATEELRIVDTPNAKTIAELVEQFKLPIEKTVKTLLVHAHEESGHKLVALLVRGDHDLNEIKAEKLPQVAKPLTFASEEEIRAAIGAGPGSLGPVNLSLPVIADHSVAVMSDFGAGANIDGKHYFGINWERDLALPLVADLRNVVEGDISPDGKGTLQIKRGIEVGHIFQLGTKYSEVMKATVQGEDGRNQVMTMGCYGIGVSRVVAAAIEQNHDDRGIIWPDAIAPFQVAILPMNMHKSFRVKELAEELYTTLRSHGIDVILDDRKERPGVMFADMELIGVPHNIVIGDRNLDSEEVEYKNRRVGEKQMIKTSEIVEFLLSQIKR</sequence>
<reference key="1">
    <citation type="journal article" date="2006" name="J. Bacteriol.">
        <title>Complete genome sequence of Yersinia pestis strains Antiqua and Nepal516: evidence of gene reduction in an emerging pathogen.</title>
        <authorList>
            <person name="Chain P.S.G."/>
            <person name="Hu P."/>
            <person name="Malfatti S.A."/>
            <person name="Radnedge L."/>
            <person name="Larimer F."/>
            <person name="Vergez L.M."/>
            <person name="Worsham P."/>
            <person name="Chu M.C."/>
            <person name="Andersen G.L."/>
        </authorList>
    </citation>
    <scope>NUCLEOTIDE SEQUENCE [LARGE SCALE GENOMIC DNA]</scope>
    <source>
        <strain>Nepal516</strain>
    </source>
</reference>
<reference key="2">
    <citation type="submission" date="2009-04" db="EMBL/GenBank/DDBJ databases">
        <title>Yersinia pestis Nepal516A whole genome shotgun sequencing project.</title>
        <authorList>
            <person name="Plunkett G. III"/>
            <person name="Anderson B.D."/>
            <person name="Baumler D.J."/>
            <person name="Burland V."/>
            <person name="Cabot E.L."/>
            <person name="Glasner J.D."/>
            <person name="Mau B."/>
            <person name="Neeno-Eckwall E."/>
            <person name="Perna N.T."/>
            <person name="Munk A.C."/>
            <person name="Tapia R."/>
            <person name="Green L.D."/>
            <person name="Rogers Y.C."/>
            <person name="Detter J.C."/>
            <person name="Bruce D.C."/>
            <person name="Brettin T.S."/>
        </authorList>
    </citation>
    <scope>NUCLEOTIDE SEQUENCE [LARGE SCALE GENOMIC DNA]</scope>
    <source>
        <strain>Nepal516</strain>
    </source>
</reference>
<comment type="function">
    <text evidence="1">Catalyzes the attachment of proline to tRNA(Pro) in a two-step reaction: proline is first activated by ATP to form Pro-AMP and then transferred to the acceptor end of tRNA(Pro). As ProRS can inadvertently accommodate and process non-cognate amino acids such as alanine and cysteine, to avoid such errors it has two additional distinct editing activities against alanine. One activity is designated as 'pretransfer' editing and involves the tRNA(Pro)-independent hydrolysis of activated Ala-AMP. The other activity is designated 'posttransfer' editing and involves deacylation of mischarged Ala-tRNA(Pro). The misacylated Cys-tRNA(Pro) is not edited by ProRS.</text>
</comment>
<comment type="catalytic activity">
    <reaction evidence="1">
        <text>tRNA(Pro) + L-proline + ATP = L-prolyl-tRNA(Pro) + AMP + diphosphate</text>
        <dbReference type="Rhea" id="RHEA:14305"/>
        <dbReference type="Rhea" id="RHEA-COMP:9700"/>
        <dbReference type="Rhea" id="RHEA-COMP:9702"/>
        <dbReference type="ChEBI" id="CHEBI:30616"/>
        <dbReference type="ChEBI" id="CHEBI:33019"/>
        <dbReference type="ChEBI" id="CHEBI:60039"/>
        <dbReference type="ChEBI" id="CHEBI:78442"/>
        <dbReference type="ChEBI" id="CHEBI:78532"/>
        <dbReference type="ChEBI" id="CHEBI:456215"/>
        <dbReference type="EC" id="6.1.1.15"/>
    </reaction>
</comment>
<comment type="subunit">
    <text evidence="1">Homodimer.</text>
</comment>
<comment type="subcellular location">
    <subcellularLocation>
        <location evidence="1">Cytoplasm</location>
    </subcellularLocation>
</comment>
<comment type="domain">
    <text evidence="1">Consists of three domains: the N-terminal catalytic domain, the editing domain and the C-terminal anticodon-binding domain.</text>
</comment>
<comment type="similarity">
    <text evidence="1">Belongs to the class-II aminoacyl-tRNA synthetase family. ProS type 1 subfamily.</text>
</comment>